<keyword id="KW-0162">Chylomicron</keyword>
<keyword id="KW-0967">Endosome</keyword>
<keyword id="KW-0272">Extracellular matrix</keyword>
<keyword id="KW-0325">Glycoprotein</keyword>
<keyword id="KW-0345">HDL</keyword>
<keyword id="KW-0358">Heparin-binding</keyword>
<keyword id="KW-0445">Lipid transport</keyword>
<keyword id="KW-0446">Lipid-binding</keyword>
<keyword id="KW-0558">Oxidation</keyword>
<keyword id="KW-0597">Phosphoprotein</keyword>
<keyword id="KW-0677">Repeat</keyword>
<keyword id="KW-0964">Secreted</keyword>
<keyword id="KW-0732">Signal</keyword>
<keyword id="KW-0813">Transport</keyword>
<keyword id="KW-0850">VLDL</keyword>
<name>APOE_ORCOR</name>
<dbReference type="EMBL" id="ANOL02028377">
    <property type="status" value="NOT_ANNOTATED_CDS"/>
    <property type="molecule type" value="Genomic_DNA"/>
</dbReference>
<dbReference type="RefSeq" id="XP_004271235.1">
    <property type="nucleotide sequence ID" value="XM_004271187.1"/>
</dbReference>
<dbReference type="SMR" id="P0DML9"/>
<dbReference type="GeneID" id="101270531"/>
<dbReference type="KEGG" id="oor:101270531"/>
<dbReference type="CTD" id="348"/>
<dbReference type="GO" id="GO:0042627">
    <property type="term" value="C:chylomicron"/>
    <property type="evidence" value="ECO:0007669"/>
    <property type="project" value="UniProtKB-KW"/>
</dbReference>
<dbReference type="GO" id="GO:0070062">
    <property type="term" value="C:extracellular exosome"/>
    <property type="evidence" value="ECO:0000250"/>
    <property type="project" value="UniProtKB"/>
</dbReference>
<dbReference type="GO" id="GO:0031012">
    <property type="term" value="C:extracellular matrix"/>
    <property type="evidence" value="ECO:0000250"/>
    <property type="project" value="UniProtKB"/>
</dbReference>
<dbReference type="GO" id="GO:0005615">
    <property type="term" value="C:extracellular space"/>
    <property type="evidence" value="ECO:0000250"/>
    <property type="project" value="UniProtKB"/>
</dbReference>
<dbReference type="GO" id="GO:0034364">
    <property type="term" value="C:high-density lipoprotein particle"/>
    <property type="evidence" value="ECO:0000250"/>
    <property type="project" value="UniProtKB"/>
</dbReference>
<dbReference type="GO" id="GO:0034363">
    <property type="term" value="C:intermediate-density lipoprotein particle"/>
    <property type="evidence" value="ECO:0000250"/>
    <property type="project" value="UniProtKB"/>
</dbReference>
<dbReference type="GO" id="GO:0034362">
    <property type="term" value="C:low-density lipoprotein particle"/>
    <property type="evidence" value="ECO:0000250"/>
    <property type="project" value="UniProtKB"/>
</dbReference>
<dbReference type="GO" id="GO:0097487">
    <property type="term" value="C:multivesicular body, internal vesicle"/>
    <property type="evidence" value="ECO:0000250"/>
    <property type="project" value="UniProtKB"/>
</dbReference>
<dbReference type="GO" id="GO:0034361">
    <property type="term" value="C:very-low-density lipoprotein particle"/>
    <property type="evidence" value="ECO:0000250"/>
    <property type="project" value="UniProtKB"/>
</dbReference>
<dbReference type="GO" id="GO:0120020">
    <property type="term" value="F:cholesterol transfer activity"/>
    <property type="evidence" value="ECO:0007669"/>
    <property type="project" value="TreeGrafter"/>
</dbReference>
<dbReference type="GO" id="GO:0043395">
    <property type="term" value="F:heparan sulfate proteoglycan binding"/>
    <property type="evidence" value="ECO:0000250"/>
    <property type="project" value="UniProtKB"/>
</dbReference>
<dbReference type="GO" id="GO:0008201">
    <property type="term" value="F:heparin binding"/>
    <property type="evidence" value="ECO:0000250"/>
    <property type="project" value="UniProtKB"/>
</dbReference>
<dbReference type="GO" id="GO:0042802">
    <property type="term" value="F:identical protein binding"/>
    <property type="evidence" value="ECO:0000250"/>
    <property type="project" value="UniProtKB"/>
</dbReference>
<dbReference type="GO" id="GO:0050750">
    <property type="term" value="F:low-density lipoprotein particle receptor binding"/>
    <property type="evidence" value="ECO:0000250"/>
    <property type="project" value="UniProtKB"/>
</dbReference>
<dbReference type="GO" id="GO:0060228">
    <property type="term" value="F:phosphatidylcholine-sterol O-acyltransferase activator activity"/>
    <property type="evidence" value="ECO:0007669"/>
    <property type="project" value="TreeGrafter"/>
</dbReference>
<dbReference type="GO" id="GO:0005543">
    <property type="term" value="F:phospholipid binding"/>
    <property type="evidence" value="ECO:0007669"/>
    <property type="project" value="TreeGrafter"/>
</dbReference>
<dbReference type="GO" id="GO:0055090">
    <property type="term" value="P:acylglycerol homeostasis"/>
    <property type="evidence" value="ECO:0007669"/>
    <property type="project" value="TreeGrafter"/>
</dbReference>
<dbReference type="GO" id="GO:0033344">
    <property type="term" value="P:cholesterol efflux"/>
    <property type="evidence" value="ECO:0000250"/>
    <property type="project" value="UniProtKB"/>
</dbReference>
<dbReference type="GO" id="GO:0008203">
    <property type="term" value="P:cholesterol metabolic process"/>
    <property type="evidence" value="ECO:0007669"/>
    <property type="project" value="TreeGrafter"/>
</dbReference>
<dbReference type="GO" id="GO:0034382">
    <property type="term" value="P:chylomicron remnant clearance"/>
    <property type="evidence" value="ECO:0000250"/>
    <property type="project" value="UniProtKB"/>
</dbReference>
<dbReference type="GO" id="GO:0034380">
    <property type="term" value="P:high-density lipoprotein particle assembly"/>
    <property type="evidence" value="ECO:0000250"/>
    <property type="project" value="UniProtKB"/>
</dbReference>
<dbReference type="GO" id="GO:0071831">
    <property type="term" value="P:intermediate-density lipoprotein particle clearance"/>
    <property type="evidence" value="ECO:0000250"/>
    <property type="project" value="UniProtKB"/>
</dbReference>
<dbReference type="GO" id="GO:0042158">
    <property type="term" value="P:lipoprotein biosynthetic process"/>
    <property type="evidence" value="ECO:0000250"/>
    <property type="project" value="UniProtKB"/>
</dbReference>
<dbReference type="GO" id="GO:0032438">
    <property type="term" value="P:melanosome organization"/>
    <property type="evidence" value="ECO:0000250"/>
    <property type="project" value="UniProtKB"/>
</dbReference>
<dbReference type="GO" id="GO:0033700">
    <property type="term" value="P:phospholipid efflux"/>
    <property type="evidence" value="ECO:0007669"/>
    <property type="project" value="TreeGrafter"/>
</dbReference>
<dbReference type="GO" id="GO:0071830">
    <property type="term" value="P:triglyceride-rich lipoprotein particle clearance"/>
    <property type="evidence" value="ECO:0000250"/>
    <property type="project" value="UniProtKB"/>
</dbReference>
<dbReference type="GO" id="GO:0034447">
    <property type="term" value="P:very-low-density lipoprotein particle clearance"/>
    <property type="evidence" value="ECO:0000250"/>
    <property type="project" value="UniProtKB"/>
</dbReference>
<dbReference type="FunFam" id="1.20.120.20:FF:000002">
    <property type="entry name" value="Apolipoprotein E"/>
    <property type="match status" value="1"/>
</dbReference>
<dbReference type="FunFam" id="1.20.120.20:FF:000003">
    <property type="entry name" value="Apolipoprotein E"/>
    <property type="match status" value="1"/>
</dbReference>
<dbReference type="FunFam" id="1.20.5.1230:FF:000002">
    <property type="entry name" value="Apolipoprotein E"/>
    <property type="match status" value="1"/>
</dbReference>
<dbReference type="Gene3D" id="1.20.120.20">
    <property type="entry name" value="Apolipoprotein"/>
    <property type="match status" value="1"/>
</dbReference>
<dbReference type="Gene3D" id="1.20.5.1230">
    <property type="entry name" value="Apolipoprotein A-I"/>
    <property type="match status" value="1"/>
</dbReference>
<dbReference type="InterPro" id="IPR000074">
    <property type="entry name" value="ApoA_E"/>
</dbReference>
<dbReference type="InterPro" id="IPR050163">
    <property type="entry name" value="Apolipoprotein_A1/A4/E"/>
</dbReference>
<dbReference type="PANTHER" id="PTHR18976">
    <property type="entry name" value="APOLIPOPROTEIN"/>
    <property type="match status" value="1"/>
</dbReference>
<dbReference type="PANTHER" id="PTHR18976:SF2">
    <property type="entry name" value="APOLIPOPROTEIN E"/>
    <property type="match status" value="1"/>
</dbReference>
<dbReference type="Pfam" id="PF01442">
    <property type="entry name" value="Apolipoprotein"/>
    <property type="match status" value="1"/>
</dbReference>
<dbReference type="SUPFAM" id="SSF58113">
    <property type="entry name" value="Apolipoprotein A-I"/>
    <property type="match status" value="1"/>
</dbReference>
<accession>P0DML9</accession>
<feature type="signal peptide" evidence="3">
    <location>
        <begin position="1"/>
        <end position="18"/>
    </location>
</feature>
<feature type="chain" id="PRO_0000429977" description="Apolipoprotein E">
    <location>
        <begin position="19"/>
        <end position="316"/>
    </location>
</feature>
<feature type="repeat" description="1">
    <location>
        <begin position="79"/>
        <end position="100"/>
    </location>
</feature>
<feature type="repeat" description="2">
    <location>
        <begin position="101"/>
        <end position="122"/>
    </location>
</feature>
<feature type="repeat" description="3">
    <location>
        <begin position="123"/>
        <end position="144"/>
    </location>
</feature>
<feature type="repeat" description="4">
    <location>
        <begin position="145"/>
        <end position="166"/>
    </location>
</feature>
<feature type="repeat" description="5">
    <location>
        <begin position="167"/>
        <end position="188"/>
    </location>
</feature>
<feature type="repeat" description="6">
    <location>
        <begin position="189"/>
        <end position="210"/>
    </location>
</feature>
<feature type="repeat" description="7">
    <location>
        <begin position="211"/>
        <end position="232"/>
    </location>
</feature>
<feature type="repeat" description="8">
    <location>
        <begin position="233"/>
        <end position="254"/>
    </location>
</feature>
<feature type="region of interest" description="8 X 22 AA approximate tandem repeats">
    <location>
        <begin position="79"/>
        <end position="254"/>
    </location>
</feature>
<feature type="region of interest" description="LDL and other lipoprotein receptors binding" evidence="1">
    <location>
        <begin position="157"/>
        <end position="167"/>
    </location>
</feature>
<feature type="region of interest" description="Lipid-binding and lipoprotein association" evidence="1">
    <location>
        <begin position="209"/>
        <end position="289"/>
    </location>
</feature>
<feature type="region of interest" description="Homooligomerization" evidence="1">
    <location>
        <begin position="265"/>
        <end position="316"/>
    </location>
</feature>
<feature type="region of interest" description="Specificity for association with VLDL" evidence="1">
    <location>
        <begin position="277"/>
        <end position="289"/>
    </location>
</feature>
<feature type="binding site" evidence="1">
    <location>
        <begin position="161"/>
        <end position="164"/>
    </location>
    <ligand>
        <name>heparin</name>
        <dbReference type="ChEBI" id="CHEBI:28304"/>
    </ligand>
</feature>
<feature type="binding site" evidence="1">
    <location>
        <begin position="228"/>
        <end position="235"/>
    </location>
    <ligand>
        <name>heparin</name>
        <dbReference type="ChEBI" id="CHEBI:28304"/>
    </ligand>
</feature>
<feature type="modified residue" description="Methionine sulfoxide" evidence="2">
    <location>
        <position position="142"/>
    </location>
</feature>
<gene>
    <name type="primary">APOE</name>
</gene>
<proteinExistence type="inferred from homology"/>
<protein>
    <recommendedName>
        <fullName>Apolipoprotein E</fullName>
        <shortName>Apo-E</shortName>
    </recommendedName>
</protein>
<evidence type="ECO:0000250" key="1">
    <source>
        <dbReference type="UniProtKB" id="P02649"/>
    </source>
</evidence>
<evidence type="ECO:0000250" key="2">
    <source>
        <dbReference type="UniProtKB" id="P08226"/>
    </source>
</evidence>
<evidence type="ECO:0000255" key="3"/>
<evidence type="ECO:0000305" key="4"/>
<sequence>MKVLWVALVITLLAGCQAEVEPEPEPEVQLGREWPRWQGSQPWEQALGRFWDYLRWVQTLSDQVQEELLSTQVIQELTVLMDETMKEVKAYREELEGQLGPIAQETQARVSKELQAAQARLASDMEDVRSRVAQYRSEVQAMMGQTTDELRGRLASHLRKLRKRLLRDAEDLQKRLAVYRAGALEGSERSVSAIRERLGPLVEQGRVRAATVGTLASQTLRERAEAWHQKLRGRMEEMGTQARDHLEEMREQLEEVRAKVEEQGSQMRLQAEAFQARLKSWFEPLVEDMQRQWAGLVEKVQLAMATSPTSAPIENS</sequence>
<comment type="function">
    <text evidence="1">APOE is an apolipoprotein, a protein associating with lipid particles, that mainly functions in lipoprotein-mediated lipid transport between organs via the plasma and interstitial fluids. APOE is a core component of plasma lipoproteins and is involved in their production, conversion and clearance. Apolipoproteins are amphipathic molecules that interact both with lipids of the lipoprotein particle core and the aqueous environment of the plasma. As such, APOE associates with chylomicrons, chylomicron remnants, very low density lipoproteins (VLDL) and intermediate density lipoproteins (IDL) but shows a preferential binding to high-density lipoproteins (HDL). It also binds a wide range of cellular receptors including the LDL receptor/LDLR and the very low-density lipoprotein receptor/VLDLR that mediate the cellular uptake of the APOE-containing lipoprotein particles. Finally, APOE also has a heparin-binding activity and binds heparan-sulfate proteoglycans on the surface of cells, a property that supports the capture and the receptor-mediated uptake of APOE-containing lipoproteins by cells.</text>
</comment>
<comment type="subunit">
    <text evidence="1">Homotetramer. May interact with ABCA1; functionally associated with ABCA1 in the biogenesis of HDLs. May interact with APP/A4 amyloid-beta peptide; the interaction is extremely stable in vitro but its physiological significance is unclear. May interact with MAPT. May interact with MAP2. In the cerebrospinal fluid, interacts with secreted SORL1. Interacts with PMEL; this allows the loading of PMEL luminal fragment on ILVs to induce fibril nucleation.</text>
</comment>
<comment type="subcellular location">
    <subcellularLocation>
        <location evidence="1">Secreted</location>
    </subcellularLocation>
    <subcellularLocation>
        <location evidence="1">Secreted</location>
        <location evidence="1">Extracellular space</location>
    </subcellularLocation>
    <subcellularLocation>
        <location evidence="1">Secreted</location>
        <location evidence="1">Extracellular space</location>
        <location evidence="1">Extracellular matrix</location>
    </subcellularLocation>
    <subcellularLocation>
        <location evidence="1">Extracellular vesicle</location>
    </subcellularLocation>
    <subcellularLocation>
        <location evidence="1">Endosome</location>
        <location evidence="1">Multivesicular body</location>
    </subcellularLocation>
    <text evidence="1">In the plasma, APOE is associated with chylomicrons, chylomicrons remnants, VLDL, LDL and HDL lipoproteins. Lipid poor oligomeric APOE is associated with the extracellular matrix in a calcium- and heparan-sulfate proteoglycans-dependent manner. Lipidation induces the release from the extracellular matrix. Colocalizes with CD63 and PMEL at exosomes and in intraluminal vesicles within multivesicular endosomes.</text>
</comment>
<comment type="PTM">
    <text evidence="1">APOE exists as multiple glycosylated and sialylated glycoforms within cells and in plasma. The extent of glycosylation and sialylation are tissue and context specific.</text>
</comment>
<comment type="PTM">
    <text evidence="1">Glycated in plasma VLDL.</text>
</comment>
<comment type="PTM">
    <text evidence="1">Phosphorylated by FAM20C in the extracellular medium.</text>
</comment>
<comment type="similarity">
    <text evidence="4">Belongs to the apolipoprotein A1/A4/E family.</text>
</comment>
<reference key="1">
    <citation type="submission" date="2013-01" db="EMBL/GenBank/DDBJ databases">
        <authorList>
            <person name="Foote A.D."/>
            <person name="Gilbert M.T.P."/>
            <person name="Liu Y."/>
            <person name="Lee S.L."/>
            <person name="Dugan-Rocha S."/>
            <person name="Jhangiani S."/>
            <person name="Bandaranaike D."/>
            <person name="Batterton M."/>
            <person name="Bellair M."/>
            <person name="Bess C."/>
            <person name="Blankenburg K."/>
            <person name="Chao H."/>
            <person name="Denson S."/>
            <person name="Dinh H."/>
            <person name="Elkadiri S."/>
            <person name="Fu Q."/>
            <person name="Hernandez B."/>
            <person name="Javaid M."/>
            <person name="Jayaseelan J.C."/>
            <person name="Lee S."/>
            <person name="Li M."/>
            <person name="Liu X."/>
            <person name="Matskevitch T."/>
            <person name="Munidasa M."/>
            <person name="Najjar R."/>
            <person name="Nguyen L."/>
            <person name="Ongeri F."/>
            <person name="Osuji N."/>
            <person name="Perales L."/>
            <person name="Pu L.-L."/>
            <person name="Puazo M."/>
            <person name="Qi S."/>
            <person name="Qu C."/>
            <person name="Quiroz J."/>
            <person name="Raj R."/>
            <person name="Shafer J."/>
            <person name="Shen H."/>
            <person name="Tabassum N."/>
            <person name="Tang L.-Y."/>
            <person name="Taylor A."/>
            <person name="Weissenberger G."/>
            <person name="Wu Y.-Q."/>
            <person name="Xin Y."/>
            <person name="Zhang Y."/>
            <person name="Zhu Y."/>
            <person name="Zou X."/>
            <person name="Muzny D."/>
            <person name="Worley K."/>
            <person name="Gibbs R."/>
        </authorList>
    </citation>
    <scope>NUCLEOTIDE SEQUENCE [LARGE SCALE GENOMIC DNA]</scope>
</reference>
<reference key="2">
    <citation type="unpublished observations" date="2014-06">
        <authorList>
            <person name="Puppione D.L."/>
        </authorList>
    </citation>
    <scope>IDENTIFICATION</scope>
</reference>
<organism>
    <name type="scientific">Orcinus orca</name>
    <name type="common">Killer whale</name>
    <name type="synonym">Delphinus orca</name>
    <dbReference type="NCBI Taxonomy" id="9733"/>
    <lineage>
        <taxon>Eukaryota</taxon>
        <taxon>Metazoa</taxon>
        <taxon>Chordata</taxon>
        <taxon>Craniata</taxon>
        <taxon>Vertebrata</taxon>
        <taxon>Euteleostomi</taxon>
        <taxon>Mammalia</taxon>
        <taxon>Eutheria</taxon>
        <taxon>Laurasiatheria</taxon>
        <taxon>Artiodactyla</taxon>
        <taxon>Whippomorpha</taxon>
        <taxon>Cetacea</taxon>
        <taxon>Odontoceti</taxon>
        <taxon>Delphinidae</taxon>
        <taxon>Orcinus</taxon>
    </lineage>
</organism>